<gene>
    <name type="primary">MINDY1</name>
    <name type="synonym">FAM63A</name>
</gene>
<evidence type="ECO:0000250" key="1">
    <source>
        <dbReference type="UniProtKB" id="Q8N5J2"/>
    </source>
</evidence>
<evidence type="ECO:0000256" key="2">
    <source>
        <dbReference type="SAM" id="MobiDB-lite"/>
    </source>
</evidence>
<evidence type="ECO:0000305" key="3"/>
<comment type="function">
    <text evidence="1">Hydrolase that can specifically remove 'Lys-48'-linked conjugated ubiquitin from proteins. Has exodeubiquitinase activity and has a preference for long polyubiquitin chains. May play a regulatory role at the level of protein turnover.</text>
</comment>
<comment type="catalytic activity">
    <reaction evidence="1">
        <text>Thiol-dependent hydrolysis of ester, thioester, amide, peptide and isopeptide bonds formed by the C-terminal Gly of ubiquitin (a 76-residue protein attached to proteins as an intracellular targeting signal).</text>
        <dbReference type="EC" id="3.4.19.12"/>
    </reaction>
</comment>
<comment type="similarity">
    <text evidence="3">Belongs to the MINDY deubiquitinase family. FAM63 subfamily.</text>
</comment>
<name>MINY1_PONAB</name>
<accession>Q5R7G8</accession>
<organism>
    <name type="scientific">Pongo abelii</name>
    <name type="common">Sumatran orangutan</name>
    <name type="synonym">Pongo pygmaeus abelii</name>
    <dbReference type="NCBI Taxonomy" id="9601"/>
    <lineage>
        <taxon>Eukaryota</taxon>
        <taxon>Metazoa</taxon>
        <taxon>Chordata</taxon>
        <taxon>Craniata</taxon>
        <taxon>Vertebrata</taxon>
        <taxon>Euteleostomi</taxon>
        <taxon>Mammalia</taxon>
        <taxon>Eutheria</taxon>
        <taxon>Euarchontoglires</taxon>
        <taxon>Primates</taxon>
        <taxon>Haplorrhini</taxon>
        <taxon>Catarrhini</taxon>
        <taxon>Hominidae</taxon>
        <taxon>Pongo</taxon>
    </lineage>
</organism>
<feature type="chain" id="PRO_0000344039" description="Ubiquitin carboxyl-terminal hydrolase MINDY-1">
    <location>
        <begin position="1"/>
        <end position="469"/>
    </location>
</feature>
<feature type="region of interest" description="Disordered" evidence="2">
    <location>
        <begin position="1"/>
        <end position="85"/>
    </location>
</feature>
<feature type="region of interest" description="Ubiquitin-binding domain (UBD)" evidence="1">
    <location>
        <begin position="388"/>
        <end position="426"/>
    </location>
</feature>
<feature type="region of interest" description="Disordered" evidence="2">
    <location>
        <begin position="428"/>
        <end position="469"/>
    </location>
</feature>
<feature type="compositionally biased region" description="Basic and acidic residues" evidence="2">
    <location>
        <begin position="34"/>
        <end position="53"/>
    </location>
</feature>
<feature type="compositionally biased region" description="Basic and acidic residues" evidence="2">
    <location>
        <begin position="453"/>
        <end position="469"/>
    </location>
</feature>
<feature type="active site" description="Nucleophile" evidence="1">
    <location>
        <position position="137"/>
    </location>
</feature>
<feature type="active site" description="Proton acceptor" evidence="1">
    <location>
        <position position="319"/>
    </location>
</feature>
<feature type="site" description="Ubiquitin-binding" evidence="1">
    <location>
        <position position="412"/>
    </location>
</feature>
<feature type="site" description="Ubiquitin-binding" evidence="1">
    <location>
        <begin position="415"/>
        <end position="416"/>
    </location>
</feature>
<feature type="site" description="Ubiquitin-binding" evidence="1">
    <location>
        <position position="419"/>
    </location>
</feature>
<feature type="modified residue" description="Phosphoserine" evidence="1">
    <location>
        <position position="103"/>
    </location>
</feature>
<feature type="modified residue" description="Phosphoserine" evidence="1">
    <location>
        <position position="441"/>
    </location>
</feature>
<keyword id="KW-0378">Hydrolase</keyword>
<keyword id="KW-0597">Phosphoprotein</keyword>
<keyword id="KW-0645">Protease</keyword>
<keyword id="KW-1185">Reference proteome</keyword>
<keyword id="KW-0788">Thiol protease</keyword>
<keyword id="KW-0833">Ubl conjugation pathway</keyword>
<proteinExistence type="evidence at transcript level"/>
<reference key="1">
    <citation type="submission" date="2004-11" db="EMBL/GenBank/DDBJ databases">
        <authorList>
            <consortium name="The German cDNA consortium"/>
        </authorList>
    </citation>
    <scope>NUCLEOTIDE SEQUENCE [LARGE SCALE MRNA]</scope>
    <source>
        <tissue>Kidney</tissue>
    </source>
</reference>
<protein>
    <recommendedName>
        <fullName>Ubiquitin carboxyl-terminal hydrolase MINDY-1</fullName>
        <ecNumber>3.4.19.12</ecNumber>
    </recommendedName>
    <alternativeName>
        <fullName>Deubiquitinating enzyme MINDY-1</fullName>
    </alternativeName>
    <alternativeName>
        <fullName>Protein FAM63A</fullName>
    </alternativeName>
</protein>
<sequence>MEHHQPEDPAPGKAGTVEADIPKNHEVLAGPYEHPQDTDARDADGEAGEREPADQALLPSQCGDNLESPLPEAGSAPPGPTLGTLPEVETIKACSMPQELPQSPRTRQPEPDFYCVKWIPWKGERTPIITQSTNGPCPLLAIMNILFLQWKVKLPPQKEVITSDELMAHLGNCLLSIKPQEKSEGLQLNFQQNVDDAMTVLPKLATGLDVNARFTGVSDFEYTPECSVFDLLGIPLYHGWLVDPQSPEAVRAVGKLSYNQLVERIITCKHSSDTNLVTKGLVAEQFLETTAAQLTYHGLCELTAAAKEGELSVFFRNNHFSTMTKHKSHLYLLVTDQGFLQEEQIVWESLHNVDGDSCFCDSDFHLSHSLGKGPGAEGGSGSPEKQLQVDQDYLIALSLQQQQPRGTLGLTDLELAQQLQQEEYQQQQAAQPVWMRTRALSPQGRGATSGRPAGERRQRPKHESDCILL</sequence>
<dbReference type="EC" id="3.4.19.12"/>
<dbReference type="EMBL" id="CR860149">
    <property type="protein sequence ID" value="CAH92292.1"/>
    <property type="molecule type" value="mRNA"/>
</dbReference>
<dbReference type="RefSeq" id="NP_001127534.1">
    <property type="nucleotide sequence ID" value="NM_001134062.2"/>
</dbReference>
<dbReference type="SMR" id="Q5R7G8"/>
<dbReference type="FunCoup" id="Q5R7G8">
    <property type="interactions" value="946"/>
</dbReference>
<dbReference type="STRING" id="9601.ENSPPYP00000001032"/>
<dbReference type="GeneID" id="100174611"/>
<dbReference type="KEGG" id="pon:100174611"/>
<dbReference type="CTD" id="55793"/>
<dbReference type="eggNOG" id="KOG2427">
    <property type="taxonomic scope" value="Eukaryota"/>
</dbReference>
<dbReference type="InParanoid" id="Q5R7G8"/>
<dbReference type="OrthoDB" id="10261212at2759"/>
<dbReference type="Proteomes" id="UP000001595">
    <property type="component" value="Unplaced"/>
</dbReference>
<dbReference type="GO" id="GO:0071944">
    <property type="term" value="C:cell periphery"/>
    <property type="evidence" value="ECO:0007669"/>
    <property type="project" value="TreeGrafter"/>
</dbReference>
<dbReference type="GO" id="GO:0005829">
    <property type="term" value="C:cytosol"/>
    <property type="evidence" value="ECO:0007669"/>
    <property type="project" value="TreeGrafter"/>
</dbReference>
<dbReference type="GO" id="GO:0016807">
    <property type="term" value="F:cysteine-type carboxypeptidase activity"/>
    <property type="evidence" value="ECO:0007669"/>
    <property type="project" value="TreeGrafter"/>
</dbReference>
<dbReference type="GO" id="GO:0004843">
    <property type="term" value="F:cysteine-type deubiquitinase activity"/>
    <property type="evidence" value="ECO:0007669"/>
    <property type="project" value="UniProtKB-EC"/>
</dbReference>
<dbReference type="GO" id="GO:1990380">
    <property type="term" value="F:K48-linked deubiquitinase activity"/>
    <property type="evidence" value="ECO:0007669"/>
    <property type="project" value="InterPro"/>
</dbReference>
<dbReference type="GO" id="GO:0036435">
    <property type="term" value="F:K48-linked polyubiquitin modification-dependent protein binding"/>
    <property type="evidence" value="ECO:0000250"/>
    <property type="project" value="UniProtKB"/>
</dbReference>
<dbReference type="GO" id="GO:0071108">
    <property type="term" value="P:protein K48-linked deubiquitination"/>
    <property type="evidence" value="ECO:0007669"/>
    <property type="project" value="TreeGrafter"/>
</dbReference>
<dbReference type="GO" id="GO:0006508">
    <property type="term" value="P:proteolysis"/>
    <property type="evidence" value="ECO:0007669"/>
    <property type="project" value="UniProtKB-KW"/>
</dbReference>
<dbReference type="InterPro" id="IPR007518">
    <property type="entry name" value="MINDY"/>
</dbReference>
<dbReference type="InterPro" id="IPR033979">
    <property type="entry name" value="MINDY_domain"/>
</dbReference>
<dbReference type="PANTHER" id="PTHR18063">
    <property type="entry name" value="NF-E2 INDUCIBLE PROTEIN"/>
    <property type="match status" value="1"/>
</dbReference>
<dbReference type="PANTHER" id="PTHR18063:SF7">
    <property type="entry name" value="UBIQUITIN CARBOXYL-TERMINAL HYDROLASE MINDY-1"/>
    <property type="match status" value="1"/>
</dbReference>
<dbReference type="Pfam" id="PF04424">
    <property type="entry name" value="MINDY_DUB"/>
    <property type="match status" value="1"/>
</dbReference>